<protein>
    <recommendedName>
        <fullName>MORN repeat-containing protein 5</fullName>
    </recommendedName>
</protein>
<dbReference type="EMBL" id="BC109519">
    <property type="protein sequence ID" value="AAI09520.1"/>
    <property type="molecule type" value="mRNA"/>
</dbReference>
<dbReference type="RefSeq" id="NP_001069778.1">
    <property type="nucleotide sequence ID" value="NM_001076310.2"/>
</dbReference>
<dbReference type="EMDB" id="EMD-50664"/>
<dbReference type="SMR" id="Q32LL6"/>
<dbReference type="FunCoup" id="Q32LL6">
    <property type="interactions" value="40"/>
</dbReference>
<dbReference type="STRING" id="9913.ENSBTAP00000005632"/>
<dbReference type="PaxDb" id="9913-ENSBTAP00000005632"/>
<dbReference type="GeneID" id="614076"/>
<dbReference type="KEGG" id="bta:614076"/>
<dbReference type="CTD" id="254956"/>
<dbReference type="eggNOG" id="KOG0231">
    <property type="taxonomic scope" value="Eukaryota"/>
</dbReference>
<dbReference type="HOGENOM" id="CLU_117237_0_0_1"/>
<dbReference type="InParanoid" id="Q32LL6"/>
<dbReference type="OrthoDB" id="300500at2759"/>
<dbReference type="TreeFam" id="TF327409"/>
<dbReference type="Proteomes" id="UP000009136">
    <property type="component" value="Unplaced"/>
</dbReference>
<dbReference type="GO" id="GO:0036126">
    <property type="term" value="C:sperm flagellum"/>
    <property type="evidence" value="ECO:0000250"/>
    <property type="project" value="UniProtKB"/>
</dbReference>
<dbReference type="Gene3D" id="2.20.110.10">
    <property type="entry name" value="Histone H3 K4-specific methyltransferase SET7/9 N-terminal domain"/>
    <property type="match status" value="1"/>
</dbReference>
<dbReference type="InterPro" id="IPR003409">
    <property type="entry name" value="MORN"/>
</dbReference>
<dbReference type="InterPro" id="IPR042814">
    <property type="entry name" value="Morn5"/>
</dbReference>
<dbReference type="PANTHER" id="PTHR46437">
    <property type="entry name" value="MORN REPEAT-CONTAINING PROTEIN 5"/>
    <property type="match status" value="1"/>
</dbReference>
<dbReference type="PANTHER" id="PTHR46437:SF1">
    <property type="entry name" value="MORN REPEAT-CONTAINING PROTEIN 5"/>
    <property type="match status" value="1"/>
</dbReference>
<dbReference type="Pfam" id="PF02493">
    <property type="entry name" value="MORN"/>
    <property type="match status" value="3"/>
</dbReference>
<dbReference type="SMART" id="SM00698">
    <property type="entry name" value="MORN"/>
    <property type="match status" value="2"/>
</dbReference>
<dbReference type="SUPFAM" id="SSF82185">
    <property type="entry name" value="Histone H3 K4-specific methyltransferase SET7/9 N-terminal domain"/>
    <property type="match status" value="1"/>
</dbReference>
<keyword id="KW-0966">Cell projection</keyword>
<keyword id="KW-0969">Cilium</keyword>
<keyword id="KW-0282">Flagellum</keyword>
<keyword id="KW-1185">Reference proteome</keyword>
<keyword id="KW-0677">Repeat</keyword>
<evidence type="ECO:0000250" key="1">
    <source>
        <dbReference type="UniProtKB" id="Q9DAI9"/>
    </source>
</evidence>
<proteinExistence type="evidence at transcript level"/>
<reference key="1">
    <citation type="submission" date="2005-11" db="EMBL/GenBank/DDBJ databases">
        <authorList>
            <consortium name="NIH - Mammalian Gene Collection (MGC) project"/>
        </authorList>
    </citation>
    <scope>NUCLEOTIDE SEQUENCE [LARGE SCALE MRNA]</scope>
    <source>
        <strain>Crossbred X Angus</strain>
        <tissue>Liver</tissue>
    </source>
</reference>
<name>MORN5_BOVIN</name>
<sequence length="172" mass="20016">MEYTGSQYIGEFVDGRMEGDAEYILPTETKYIGEMKDGMFHGQGTLYFPNGSRFDAVWEKGLVVKGTYTFSDGLQYDTENWHYCDSYDRRFYTEICYGLKPAGISQLTNMDPPRKIPPGCYDCGDGFYNPNTRIVKDYNYRFLRNADDDEHEWIVRTCRKGWDETMGPEPKS</sequence>
<accession>Q32LL6</accession>
<feature type="chain" id="PRO_0000292839" description="MORN repeat-containing protein 5">
    <location>
        <begin position="1"/>
        <end position="172"/>
    </location>
</feature>
<feature type="repeat" description="MORN 1">
    <location>
        <begin position="8"/>
        <end position="30"/>
    </location>
</feature>
<feature type="repeat" description="MORN 2">
    <location>
        <begin position="31"/>
        <end position="53"/>
    </location>
</feature>
<feature type="repeat" description="MORN 3">
    <location>
        <begin position="54"/>
        <end position="75"/>
    </location>
</feature>
<gene>
    <name type="primary">MORN5</name>
</gene>
<comment type="subcellular location">
    <subcellularLocation>
        <location evidence="1">Cell projection</location>
        <location evidence="1">Cilium</location>
        <location evidence="1">Flagellum</location>
    </subcellularLocation>
</comment>
<organism>
    <name type="scientific">Bos taurus</name>
    <name type="common">Bovine</name>
    <dbReference type="NCBI Taxonomy" id="9913"/>
    <lineage>
        <taxon>Eukaryota</taxon>
        <taxon>Metazoa</taxon>
        <taxon>Chordata</taxon>
        <taxon>Craniata</taxon>
        <taxon>Vertebrata</taxon>
        <taxon>Euteleostomi</taxon>
        <taxon>Mammalia</taxon>
        <taxon>Eutheria</taxon>
        <taxon>Laurasiatheria</taxon>
        <taxon>Artiodactyla</taxon>
        <taxon>Ruminantia</taxon>
        <taxon>Pecora</taxon>
        <taxon>Bovidae</taxon>
        <taxon>Bovinae</taxon>
        <taxon>Bos</taxon>
    </lineage>
</organism>